<feature type="signal peptide" evidence="3">
    <location>
        <begin position="1"/>
        <end position="36"/>
    </location>
</feature>
<feature type="chain" id="PRO_0000313886" description="Fibronectin-binding protein A">
    <location>
        <begin position="37"/>
        <end position="982"/>
    </location>
</feature>
<feature type="propeptide" id="PRO_0000313887" description="Removed by sortase" evidence="4">
    <location>
        <begin position="983"/>
        <end position="1015"/>
    </location>
</feature>
<feature type="repeat" description="B-1">
    <location>
        <begin position="546"/>
        <end position="575"/>
    </location>
</feature>
<feature type="repeat" description="B-2">
    <location>
        <begin position="576"/>
        <end position="605"/>
    </location>
</feature>
<feature type="repeat" description="D-1">
    <location>
        <begin position="746"/>
        <end position="783"/>
    </location>
</feature>
<feature type="repeat" description="D-2">
    <location>
        <begin position="784"/>
        <end position="821"/>
    </location>
</feature>
<feature type="repeat" description="D-3">
    <location>
        <begin position="822"/>
        <end position="860"/>
    </location>
</feature>
<feature type="repeat" description="D-4; truncated">
    <location>
        <begin position="861"/>
        <end position="875"/>
    </location>
</feature>
<feature type="repeat" description="WR 1">
    <location>
        <begin position="876"/>
        <end position="889"/>
    </location>
</feature>
<feature type="repeat" description="WR 2">
    <location>
        <begin position="890"/>
        <end position="903"/>
    </location>
</feature>
<feature type="repeat" description="WR 3">
    <location>
        <begin position="904"/>
        <end position="917"/>
    </location>
</feature>
<feature type="repeat" description="WR 4">
    <location>
        <begin position="918"/>
        <end position="931"/>
    </location>
</feature>
<feature type="repeat" description="WR 5">
    <location>
        <begin position="932"/>
        <end position="945"/>
    </location>
</feature>
<feature type="region of interest" description="Ligand-binding A region">
    <location>
        <begin position="37"/>
        <end position="512"/>
    </location>
</feature>
<feature type="region of interest" description="Disordered" evidence="5">
    <location>
        <begin position="75"/>
        <end position="199"/>
    </location>
</feature>
<feature type="region of interest" description="Fibrinogen/elastin/tropoelastin-binding" evidence="1">
    <location>
        <begin position="194"/>
        <end position="512"/>
    </location>
</feature>
<feature type="region of interest" description="Fibronectin-binding" evidence="1">
    <location>
        <begin position="513"/>
        <end position="873"/>
    </location>
</feature>
<feature type="region of interest" description="2 X approximate tandem repeats">
    <location>
        <begin position="546"/>
        <end position="605"/>
    </location>
</feature>
<feature type="region of interest" description="Disordered" evidence="5">
    <location>
        <begin position="596"/>
        <end position="623"/>
    </location>
</feature>
<feature type="region of interest" description="Disordered" evidence="5">
    <location>
        <begin position="741"/>
        <end position="815"/>
    </location>
</feature>
<feature type="region of interest" description="4 X approximate tandem repeats">
    <location>
        <begin position="746"/>
        <end position="875"/>
    </location>
</feature>
<feature type="region of interest" description="Disordered" evidence="5">
    <location>
        <begin position="828"/>
        <end position="953"/>
    </location>
</feature>
<feature type="region of interest" description="5 X tandem repeats, Pro-rich (WR)">
    <location>
        <begin position="876"/>
        <end position="945"/>
    </location>
</feature>
<feature type="region of interest" description="Disordered" evidence="5">
    <location>
        <begin position="966"/>
        <end position="992"/>
    </location>
</feature>
<feature type="short sequence motif" description="YSIRK-G/S signaling motif" evidence="2">
    <location>
        <begin position="7"/>
        <end position="18"/>
    </location>
</feature>
<feature type="short sequence motif" description="LPXTG sorting signal" evidence="4">
    <location>
        <begin position="979"/>
        <end position="983"/>
    </location>
</feature>
<feature type="compositionally biased region" description="Polar residues" evidence="5">
    <location>
        <begin position="75"/>
        <end position="92"/>
    </location>
</feature>
<feature type="compositionally biased region" description="Basic and acidic residues" evidence="5">
    <location>
        <begin position="112"/>
        <end position="126"/>
    </location>
</feature>
<feature type="compositionally biased region" description="Polar residues" evidence="5">
    <location>
        <begin position="129"/>
        <end position="139"/>
    </location>
</feature>
<feature type="compositionally biased region" description="Basic and acidic residues" evidence="5">
    <location>
        <begin position="179"/>
        <end position="193"/>
    </location>
</feature>
<feature type="compositionally biased region" description="Polar residues" evidence="5">
    <location>
        <begin position="780"/>
        <end position="791"/>
    </location>
</feature>
<feature type="compositionally biased region" description="Basic and acidic residues" evidence="5">
    <location>
        <begin position="828"/>
        <end position="839"/>
    </location>
</feature>
<feature type="compositionally biased region" description="Pro residues" evidence="5">
    <location>
        <begin position="875"/>
        <end position="935"/>
    </location>
</feature>
<feature type="modified residue" description="Pentaglycyl murein peptidoglycan amidated threonine" evidence="4">
    <location>
        <position position="982"/>
    </location>
</feature>
<name>FNBA_STAAS</name>
<proteinExistence type="inferred from homology"/>
<reference key="1">
    <citation type="journal article" date="2004" name="Proc. Natl. Acad. Sci. U.S.A.">
        <title>Complete genomes of two clinical Staphylococcus aureus strains: evidence for the rapid evolution of virulence and drug resistance.</title>
        <authorList>
            <person name="Holden M.T.G."/>
            <person name="Feil E.J."/>
            <person name="Lindsay J.A."/>
            <person name="Peacock S.J."/>
            <person name="Day N.P.J."/>
            <person name="Enright M.C."/>
            <person name="Foster T.J."/>
            <person name="Moore C.E."/>
            <person name="Hurst L."/>
            <person name="Atkin R."/>
            <person name="Barron A."/>
            <person name="Bason N."/>
            <person name="Bentley S.D."/>
            <person name="Chillingworth C."/>
            <person name="Chillingworth T."/>
            <person name="Churcher C."/>
            <person name="Clark L."/>
            <person name="Corton C."/>
            <person name="Cronin A."/>
            <person name="Doggett J."/>
            <person name="Dowd L."/>
            <person name="Feltwell T."/>
            <person name="Hance Z."/>
            <person name="Harris B."/>
            <person name="Hauser H."/>
            <person name="Holroyd S."/>
            <person name="Jagels K."/>
            <person name="James K.D."/>
            <person name="Lennard N."/>
            <person name="Line A."/>
            <person name="Mayes R."/>
            <person name="Moule S."/>
            <person name="Mungall K."/>
            <person name="Ormond D."/>
            <person name="Quail M.A."/>
            <person name="Rabbinowitsch E."/>
            <person name="Rutherford K.M."/>
            <person name="Sanders M."/>
            <person name="Sharp S."/>
            <person name="Simmonds M."/>
            <person name="Stevens K."/>
            <person name="Whitehead S."/>
            <person name="Barrell B.G."/>
            <person name="Spratt B.G."/>
            <person name="Parkhill J."/>
        </authorList>
    </citation>
    <scope>NUCLEOTIDE SEQUENCE [LARGE SCALE GENOMIC DNA]</scope>
    <source>
        <strain>MSSA476</strain>
    </source>
</reference>
<gene>
    <name type="primary">fnbA</name>
    <name type="ordered locus">SAS2388</name>
</gene>
<sequence>MKNNLRYGIRKHKLGAASVFLGTMIVVGMGQDKEAAASEQKTTTVEENGNSATENKVNETQTTTTNVNTIDETQSYSATATEQPSNATQVTTEEAPKAVQAPQTAQPANLETVKEEVVKEEAKPQVKETTQSQDNSGDQRQVDLTPKKATQNQVAETQVEVAQPRTASESKPRVTRSADVVEAKEASDEKVETGTDVTSKVTVESGSIEAPQGNKVEPHAGQRVVLKYKLKFADGLKRGDYFDFTLSNNVNTYGVSTARKVPEIKNGSVVMATGEILGNGNIRYTFTNEIEHKVEVTANLEINLFIDPKTVQSNGEQKITSKLNGEETEKTIPVVYNPGVSNSYTNVNGSIETFNKESNKFTHIAYIKPMNGNQSNTVSVTGTLTEGSNLAGGQPTVKVYEYLGKKDELPQSVYANTSDTNKFKDVTKEMNGKLSVQDNGSYSLNLDKLDKTYVIHYTGEYLQGSDQVNFRTELYGYPERAYKSYYVYGGYRLTWDNGLVLYSNKADGNGKNGQIIQNNDFEYKEDTAKGTMSGQYDAKQIIETEENQDNTPLDIDYHTAIDGEGGYVDGYIETIEETDSSAIDIDYHTAVDSEAGHVGGYTESSEESNPIDFEESTHENSKHHADVVEYEEDTNPGGGQVTTESNLVEFDEESTKGIVTGAVSDHTTIEDTKEYTTESNLIELVDELPEEHGQAQGPIEEITENNHHISHSGLGTENGHGNYGVIEEIEENSHVDIKSELGYEGGQNSGNQSFEEDTEEDKPKYEQGGNIVDIDFDSVPQIQGQNNGNQSFEEDTEKDKPKYEQGGNIIDIDFDSVPQIHGFNKHTEIIEEDTNKDKPNYQFGGHNSVDFEEDTLPKVSGQNEGQQTIEEDTTPPTPPTPEVPSEPETPTPPTPEVPSEPETPTPPTPEVPSEPETPTPPTPEVPAEPGKPVPPAKEEPKKPSKPVEQGKVVTPVIEINEKVKAVAPTKKAQSKKSELPETGGEESTNKGMLFGGLFSILGLALLRRNKKNNKA</sequence>
<accession>Q6G6H3</accession>
<protein>
    <recommendedName>
        <fullName>Fibronectin-binding protein A</fullName>
    </recommendedName>
</protein>
<dbReference type="EMBL" id="BX571857">
    <property type="protein sequence ID" value="CAG44202.1"/>
    <property type="molecule type" value="Genomic_DNA"/>
</dbReference>
<dbReference type="RefSeq" id="WP_000794648.1">
    <property type="nucleotide sequence ID" value="NC_002953.3"/>
</dbReference>
<dbReference type="SMR" id="Q6G6H3"/>
<dbReference type="KEGG" id="sas:SAS2388"/>
<dbReference type="HOGENOM" id="CLU_009849_1_0_9"/>
<dbReference type="GO" id="GO:0005576">
    <property type="term" value="C:extracellular region"/>
    <property type="evidence" value="ECO:0007669"/>
    <property type="project" value="UniProtKB-KW"/>
</dbReference>
<dbReference type="GO" id="GO:0007155">
    <property type="term" value="P:cell adhesion"/>
    <property type="evidence" value="ECO:0007669"/>
    <property type="project" value="UniProtKB-KW"/>
</dbReference>
<dbReference type="Gene3D" id="2.60.40.1280">
    <property type="match status" value="1"/>
</dbReference>
<dbReference type="Gene3D" id="2.60.40.1290">
    <property type="match status" value="1"/>
</dbReference>
<dbReference type="InterPro" id="IPR011266">
    <property type="entry name" value="Adhesin_Fg-bd_dom_2"/>
</dbReference>
<dbReference type="InterPro" id="IPR008966">
    <property type="entry name" value="Adhesion_dom_sf"/>
</dbReference>
<dbReference type="InterPro" id="IPR011252">
    <property type="entry name" value="Fibrogen-bd_dom1"/>
</dbReference>
<dbReference type="InterPro" id="IPR004237">
    <property type="entry name" value="Fibron_repeat-bd"/>
</dbReference>
<dbReference type="InterPro" id="IPR019931">
    <property type="entry name" value="LPXTG_anchor"/>
</dbReference>
<dbReference type="InterPro" id="IPR041171">
    <property type="entry name" value="SDR_Ig"/>
</dbReference>
<dbReference type="InterPro" id="IPR005877">
    <property type="entry name" value="YSIRK_signal_dom"/>
</dbReference>
<dbReference type="NCBIfam" id="TIGR01167">
    <property type="entry name" value="LPXTG_anchor"/>
    <property type="match status" value="1"/>
</dbReference>
<dbReference type="NCBIfam" id="TIGR01168">
    <property type="entry name" value="YSIRK_signal"/>
    <property type="match status" value="1"/>
</dbReference>
<dbReference type="Pfam" id="PF17961">
    <property type="entry name" value="Big_8"/>
    <property type="match status" value="1"/>
</dbReference>
<dbReference type="Pfam" id="PF02986">
    <property type="entry name" value="Fn_bind"/>
    <property type="match status" value="3"/>
</dbReference>
<dbReference type="Pfam" id="PF00746">
    <property type="entry name" value="Gram_pos_anchor"/>
    <property type="match status" value="1"/>
</dbReference>
<dbReference type="Pfam" id="PF10425">
    <property type="entry name" value="SdrG_C_C"/>
    <property type="match status" value="1"/>
</dbReference>
<dbReference type="Pfam" id="PF04650">
    <property type="entry name" value="YSIRK_signal"/>
    <property type="match status" value="1"/>
</dbReference>
<dbReference type="SUPFAM" id="SSF49401">
    <property type="entry name" value="Bacterial adhesins"/>
    <property type="match status" value="2"/>
</dbReference>
<dbReference type="PROSITE" id="PS50847">
    <property type="entry name" value="GRAM_POS_ANCHORING"/>
    <property type="match status" value="1"/>
</dbReference>
<evidence type="ECO:0000250" key="1"/>
<evidence type="ECO:0000250" key="2">
    <source>
        <dbReference type="UniProtKB" id="P14738"/>
    </source>
</evidence>
<evidence type="ECO:0000255" key="3"/>
<evidence type="ECO:0000255" key="4">
    <source>
        <dbReference type="PROSITE-ProRule" id="PRU00477"/>
    </source>
</evidence>
<evidence type="ECO:0000256" key="5">
    <source>
        <dbReference type="SAM" id="MobiDB-lite"/>
    </source>
</evidence>
<keyword id="KW-0130">Cell adhesion</keyword>
<keyword id="KW-0134">Cell wall</keyword>
<keyword id="KW-0572">Peptidoglycan-anchor</keyword>
<keyword id="KW-0677">Repeat</keyword>
<keyword id="KW-0964">Secreted</keyword>
<keyword id="KW-0732">Signal</keyword>
<keyword id="KW-0843">Virulence</keyword>
<comment type="function">
    <text evidence="1">Promotes bacterial attachment to multiple substrates, such as fibronectin (Fn), fibrinogen (Fg), elastin peptides and tropoelastin. This confers to S.aureus the ability to invade endothelial cells. Promotes adherence to and aggregation of activated platelets (By similarity).</text>
</comment>
<comment type="subcellular location">
    <subcellularLocation>
        <location evidence="4">Secreted</location>
        <location evidence="4">Cell wall</location>
        <topology evidence="4">Peptidoglycan-anchor</topology>
    </subcellularLocation>
    <text evidence="2">Anchored to the cell wall by sortase A (By similarity).</text>
</comment>
<organism>
    <name type="scientific">Staphylococcus aureus (strain MSSA476)</name>
    <dbReference type="NCBI Taxonomy" id="282459"/>
    <lineage>
        <taxon>Bacteria</taxon>
        <taxon>Bacillati</taxon>
        <taxon>Bacillota</taxon>
        <taxon>Bacilli</taxon>
        <taxon>Bacillales</taxon>
        <taxon>Staphylococcaceae</taxon>
        <taxon>Staphylococcus</taxon>
    </lineage>
</organism>